<reference key="1">
    <citation type="journal article" date="2008" name="Appl. Environ. Microbiol.">
        <title>The genome of Polaromonas sp. strain JS666: insights into the evolution of a hydrocarbon- and xenobiotic-degrading bacterium, and features of relevance to biotechnology.</title>
        <authorList>
            <person name="Mattes T.E."/>
            <person name="Alexander A.K."/>
            <person name="Richardson P.M."/>
            <person name="Munk A.C."/>
            <person name="Han C.S."/>
            <person name="Stothard P."/>
            <person name="Coleman N.V."/>
        </authorList>
    </citation>
    <scope>NUCLEOTIDE SEQUENCE [LARGE SCALE GENOMIC DNA]</scope>
    <source>
        <strain>JS666 / ATCC BAA-500</strain>
    </source>
</reference>
<accession>Q12F85</accession>
<sequence length="426" mass="46573">MSVWALGLNHTTAPLDLRGRFAYALDQIEPTLRGLRESLARQPEATLLSTCNRTEIYCAGDHNDLEHTLEWLAHNGGVSPALLRSHAYTLQDDQAARHAFRVASGLDSMVLGEPQILGQLKDAVRAAEDAGAMGSTLHQLFQRSFAVAKEVRTSTEIGAHSISMAAASVRLAGQLFENLGDIRVLFVGAGEMIDLAATHFAAKTPKSMAIANRTLERGEKLASRFGAEVMRLADLPSRLHEFDAVISCTASTLPIIGLGAVERAVKLRKHRPMFMVDLAVPRDIEPEVKDLPDIYLYTVDDLAHVVQTGKDNRQAAVAQAEVIIDAGVQNFMHWLGQRRTVPLIQQLNAQTDEWRAAEIARAKKLIAKGEPMDAVLDALTRGLTQKMLHGALAELHAGDAASREATAHTVSRLFLRGQPPKEHKER</sequence>
<proteinExistence type="inferred from homology"/>
<organism>
    <name type="scientific">Polaromonas sp. (strain JS666 / ATCC BAA-500)</name>
    <dbReference type="NCBI Taxonomy" id="296591"/>
    <lineage>
        <taxon>Bacteria</taxon>
        <taxon>Pseudomonadati</taxon>
        <taxon>Pseudomonadota</taxon>
        <taxon>Betaproteobacteria</taxon>
        <taxon>Burkholderiales</taxon>
        <taxon>Comamonadaceae</taxon>
        <taxon>Polaromonas</taxon>
    </lineage>
</organism>
<name>HEM1_POLSJ</name>
<dbReference type="EC" id="1.2.1.70" evidence="1"/>
<dbReference type="EMBL" id="CP000316">
    <property type="protein sequence ID" value="ABE42807.1"/>
    <property type="molecule type" value="Genomic_DNA"/>
</dbReference>
<dbReference type="RefSeq" id="WP_011481809.1">
    <property type="nucleotide sequence ID" value="NC_007948.1"/>
</dbReference>
<dbReference type="SMR" id="Q12F85"/>
<dbReference type="STRING" id="296591.Bpro_0851"/>
<dbReference type="KEGG" id="pol:Bpro_0851"/>
<dbReference type="eggNOG" id="COG0373">
    <property type="taxonomic scope" value="Bacteria"/>
</dbReference>
<dbReference type="HOGENOM" id="CLU_035113_2_2_4"/>
<dbReference type="OrthoDB" id="110209at2"/>
<dbReference type="UniPathway" id="UPA00251">
    <property type="reaction ID" value="UER00316"/>
</dbReference>
<dbReference type="Proteomes" id="UP000001983">
    <property type="component" value="Chromosome"/>
</dbReference>
<dbReference type="GO" id="GO:0008883">
    <property type="term" value="F:glutamyl-tRNA reductase activity"/>
    <property type="evidence" value="ECO:0007669"/>
    <property type="project" value="UniProtKB-UniRule"/>
</dbReference>
<dbReference type="GO" id="GO:0050661">
    <property type="term" value="F:NADP binding"/>
    <property type="evidence" value="ECO:0007669"/>
    <property type="project" value="InterPro"/>
</dbReference>
<dbReference type="GO" id="GO:0019353">
    <property type="term" value="P:protoporphyrinogen IX biosynthetic process from glutamate"/>
    <property type="evidence" value="ECO:0007669"/>
    <property type="project" value="TreeGrafter"/>
</dbReference>
<dbReference type="CDD" id="cd05213">
    <property type="entry name" value="NAD_bind_Glutamyl_tRNA_reduct"/>
    <property type="match status" value="1"/>
</dbReference>
<dbReference type="FunFam" id="3.30.460.30:FF:000001">
    <property type="entry name" value="Glutamyl-tRNA reductase"/>
    <property type="match status" value="1"/>
</dbReference>
<dbReference type="FunFam" id="3.40.50.720:FF:000031">
    <property type="entry name" value="Glutamyl-tRNA reductase"/>
    <property type="match status" value="1"/>
</dbReference>
<dbReference type="Gene3D" id="3.30.460.30">
    <property type="entry name" value="Glutamyl-tRNA reductase, N-terminal domain"/>
    <property type="match status" value="1"/>
</dbReference>
<dbReference type="Gene3D" id="3.40.50.720">
    <property type="entry name" value="NAD(P)-binding Rossmann-like Domain"/>
    <property type="match status" value="1"/>
</dbReference>
<dbReference type="HAMAP" id="MF_00087">
    <property type="entry name" value="Glu_tRNA_reductase"/>
    <property type="match status" value="1"/>
</dbReference>
<dbReference type="InterPro" id="IPR000343">
    <property type="entry name" value="4pyrrol_synth_GluRdtase"/>
</dbReference>
<dbReference type="InterPro" id="IPR015896">
    <property type="entry name" value="4pyrrol_synth_GluRdtase_dimer"/>
</dbReference>
<dbReference type="InterPro" id="IPR015895">
    <property type="entry name" value="4pyrrol_synth_GluRdtase_N"/>
</dbReference>
<dbReference type="InterPro" id="IPR018214">
    <property type="entry name" value="GluRdtase_CS"/>
</dbReference>
<dbReference type="InterPro" id="IPR036453">
    <property type="entry name" value="GluRdtase_dimer_dom_sf"/>
</dbReference>
<dbReference type="InterPro" id="IPR036343">
    <property type="entry name" value="GluRdtase_N_sf"/>
</dbReference>
<dbReference type="InterPro" id="IPR036291">
    <property type="entry name" value="NAD(P)-bd_dom_sf"/>
</dbReference>
<dbReference type="InterPro" id="IPR006151">
    <property type="entry name" value="Shikm_DH/Glu-tRNA_Rdtase"/>
</dbReference>
<dbReference type="NCBIfam" id="TIGR01035">
    <property type="entry name" value="hemA"/>
    <property type="match status" value="1"/>
</dbReference>
<dbReference type="PANTHER" id="PTHR43013">
    <property type="entry name" value="GLUTAMYL-TRNA REDUCTASE"/>
    <property type="match status" value="1"/>
</dbReference>
<dbReference type="PANTHER" id="PTHR43013:SF1">
    <property type="entry name" value="GLUTAMYL-TRNA REDUCTASE"/>
    <property type="match status" value="1"/>
</dbReference>
<dbReference type="Pfam" id="PF00745">
    <property type="entry name" value="GlutR_dimer"/>
    <property type="match status" value="1"/>
</dbReference>
<dbReference type="Pfam" id="PF05201">
    <property type="entry name" value="GlutR_N"/>
    <property type="match status" value="1"/>
</dbReference>
<dbReference type="Pfam" id="PF01488">
    <property type="entry name" value="Shikimate_DH"/>
    <property type="match status" value="1"/>
</dbReference>
<dbReference type="PIRSF" id="PIRSF000445">
    <property type="entry name" value="4pyrrol_synth_GluRdtase"/>
    <property type="match status" value="1"/>
</dbReference>
<dbReference type="SUPFAM" id="SSF69742">
    <property type="entry name" value="Glutamyl tRNA-reductase catalytic, N-terminal domain"/>
    <property type="match status" value="1"/>
</dbReference>
<dbReference type="SUPFAM" id="SSF69075">
    <property type="entry name" value="Glutamyl tRNA-reductase dimerization domain"/>
    <property type="match status" value="1"/>
</dbReference>
<dbReference type="SUPFAM" id="SSF51735">
    <property type="entry name" value="NAD(P)-binding Rossmann-fold domains"/>
    <property type="match status" value="1"/>
</dbReference>
<dbReference type="PROSITE" id="PS00747">
    <property type="entry name" value="GLUTR"/>
    <property type="match status" value="1"/>
</dbReference>
<feature type="chain" id="PRO_0000335058" description="Glutamyl-tRNA reductase">
    <location>
        <begin position="1"/>
        <end position="426"/>
    </location>
</feature>
<feature type="active site" description="Nucleophile" evidence="1">
    <location>
        <position position="51"/>
    </location>
</feature>
<feature type="binding site" evidence="1">
    <location>
        <begin position="50"/>
        <end position="53"/>
    </location>
    <ligand>
        <name>substrate</name>
    </ligand>
</feature>
<feature type="binding site" evidence="1">
    <location>
        <position position="108"/>
    </location>
    <ligand>
        <name>substrate</name>
    </ligand>
</feature>
<feature type="binding site" evidence="1">
    <location>
        <begin position="113"/>
        <end position="115"/>
    </location>
    <ligand>
        <name>substrate</name>
    </ligand>
</feature>
<feature type="binding site" evidence="1">
    <location>
        <position position="119"/>
    </location>
    <ligand>
        <name>substrate</name>
    </ligand>
</feature>
<feature type="binding site" evidence="1">
    <location>
        <begin position="188"/>
        <end position="193"/>
    </location>
    <ligand>
        <name>NADP(+)</name>
        <dbReference type="ChEBI" id="CHEBI:58349"/>
    </ligand>
</feature>
<feature type="site" description="Important for activity" evidence="1">
    <location>
        <position position="98"/>
    </location>
</feature>
<gene>
    <name evidence="1" type="primary">hemA</name>
    <name type="ordered locus">Bpro_0851</name>
</gene>
<protein>
    <recommendedName>
        <fullName evidence="1">Glutamyl-tRNA reductase</fullName>
        <shortName evidence="1">GluTR</shortName>
        <ecNumber evidence="1">1.2.1.70</ecNumber>
    </recommendedName>
</protein>
<evidence type="ECO:0000255" key="1">
    <source>
        <dbReference type="HAMAP-Rule" id="MF_00087"/>
    </source>
</evidence>
<keyword id="KW-0521">NADP</keyword>
<keyword id="KW-0560">Oxidoreductase</keyword>
<keyword id="KW-0627">Porphyrin biosynthesis</keyword>
<keyword id="KW-1185">Reference proteome</keyword>
<comment type="function">
    <text evidence="1">Catalyzes the NADPH-dependent reduction of glutamyl-tRNA(Glu) to glutamate 1-semialdehyde (GSA).</text>
</comment>
<comment type="catalytic activity">
    <reaction evidence="1">
        <text>(S)-4-amino-5-oxopentanoate + tRNA(Glu) + NADP(+) = L-glutamyl-tRNA(Glu) + NADPH + H(+)</text>
        <dbReference type="Rhea" id="RHEA:12344"/>
        <dbReference type="Rhea" id="RHEA-COMP:9663"/>
        <dbReference type="Rhea" id="RHEA-COMP:9680"/>
        <dbReference type="ChEBI" id="CHEBI:15378"/>
        <dbReference type="ChEBI" id="CHEBI:57501"/>
        <dbReference type="ChEBI" id="CHEBI:57783"/>
        <dbReference type="ChEBI" id="CHEBI:58349"/>
        <dbReference type="ChEBI" id="CHEBI:78442"/>
        <dbReference type="ChEBI" id="CHEBI:78520"/>
        <dbReference type="EC" id="1.2.1.70"/>
    </reaction>
</comment>
<comment type="pathway">
    <text evidence="1">Porphyrin-containing compound metabolism; protoporphyrin-IX biosynthesis; 5-aminolevulinate from L-glutamyl-tRNA(Glu): step 1/2.</text>
</comment>
<comment type="subunit">
    <text evidence="1">Homodimer.</text>
</comment>
<comment type="domain">
    <text evidence="1">Possesses an unusual extended V-shaped dimeric structure with each monomer consisting of three distinct domains arranged along a curved 'spinal' alpha-helix. The N-terminal catalytic domain specifically recognizes the glutamate moiety of the substrate. The second domain is the NADPH-binding domain, and the third C-terminal domain is responsible for dimerization.</text>
</comment>
<comment type="miscellaneous">
    <text evidence="1">During catalysis, the active site Cys acts as a nucleophile attacking the alpha-carbonyl group of tRNA-bound glutamate with the formation of a thioester intermediate between enzyme and glutamate, and the concomitant release of tRNA(Glu). The thioester intermediate is finally reduced by direct hydride transfer from NADPH, to form the product GSA.</text>
</comment>
<comment type="similarity">
    <text evidence="1">Belongs to the glutamyl-tRNA reductase family.</text>
</comment>